<comment type="function">
    <text evidence="1">Part of the RFC clamp loader complex which loads the PCNA sliding clamp onto DNA.</text>
</comment>
<comment type="subunit">
    <text evidence="1">Heteromultimer composed of small subunits (RfcS) and large subunits (RfcL).</text>
</comment>
<comment type="similarity">
    <text evidence="1">Belongs to the activator 1 small subunits family. RfcL subfamily.</text>
</comment>
<reference key="1">
    <citation type="submission" date="2007-02" db="EMBL/GenBank/DDBJ databases">
        <title>Complete sequence of Pyrobaculum calidifontis JCM 11548.</title>
        <authorList>
            <consortium name="US DOE Joint Genome Institute"/>
            <person name="Copeland A."/>
            <person name="Lucas S."/>
            <person name="Lapidus A."/>
            <person name="Barry K."/>
            <person name="Glavina del Rio T."/>
            <person name="Dalin E."/>
            <person name="Tice H."/>
            <person name="Pitluck S."/>
            <person name="Chain P."/>
            <person name="Malfatti S."/>
            <person name="Shin M."/>
            <person name="Vergez L."/>
            <person name="Schmutz J."/>
            <person name="Larimer F."/>
            <person name="Land M."/>
            <person name="Hauser L."/>
            <person name="Kyrpides N."/>
            <person name="Mikhailova N."/>
            <person name="Cozen A.E."/>
            <person name="Fitz-Gibbon S.T."/>
            <person name="House C.H."/>
            <person name="Saltikov C."/>
            <person name="Lowe T.M."/>
            <person name="Richardson P."/>
        </authorList>
    </citation>
    <scope>NUCLEOTIDE SEQUENCE [LARGE SCALE GENOMIC DNA]</scope>
    <source>
        <strain>DSM 21063 / JCM 11548 / VA1</strain>
    </source>
</reference>
<name>RFCL_PYRCJ</name>
<gene>
    <name evidence="1" type="primary">rfcL</name>
    <name type="ordered locus">Pcal_0004</name>
</gene>
<proteinExistence type="inferred from homology"/>
<feature type="chain" id="PRO_0000300156" description="Replication factor C large subunit">
    <location>
        <begin position="1"/>
        <end position="421"/>
    </location>
</feature>
<feature type="binding site" evidence="1">
    <location>
        <begin position="63"/>
        <end position="70"/>
    </location>
    <ligand>
        <name>ATP</name>
        <dbReference type="ChEBI" id="CHEBI:30616"/>
    </ligand>
</feature>
<protein>
    <recommendedName>
        <fullName evidence="1">Replication factor C large subunit</fullName>
        <shortName evidence="1">RFC large subunit</shortName>
    </recommendedName>
    <alternativeName>
        <fullName evidence="1">Clamp loader large subunit</fullName>
    </alternativeName>
</protein>
<evidence type="ECO:0000255" key="1">
    <source>
        <dbReference type="HAMAP-Rule" id="MF_01508"/>
    </source>
</evidence>
<keyword id="KW-0067">ATP-binding</keyword>
<keyword id="KW-0235">DNA replication</keyword>
<keyword id="KW-0547">Nucleotide-binding</keyword>
<sequence length="421" mass="47937">MPIPWVEKYRPKSFSEIVNQEEAKQILASWICTRFKAPQEFCARWAKRRDKEIKEARAVLLWGPPGIGKTTLVHALAKEIGYELVELNASDVRTGERIRQVVGRGLREASLFGYAGKIVLFDEVDGLHVKEDLGGLEAILNLIETAKVPIVLTANNPFDPKLRPLRDISLVVGLKRLSEDEVVEVLKRICASEGAKCEEEALRSLAKSSYGDLRAAINDLQLYLAGRKVLTVDDIKRAGERNPQLSMFEILDRVYKARWFDEARAVSFNPSFDWEQYFVWALETIPIVYKDLEVMSEAFDRLSKADMFIGIVKRTQEWELLSYAMELALGGVSQVKNKPRLPPFIRYGFPQRLLLLAKSKEARRRREMVVEYLARNLHVSKGLVNAEIFYVLSALAKKDDHVVERLARALGISPIDIKNLL</sequence>
<accession>A3MS27</accession>
<organism>
    <name type="scientific">Pyrobaculum calidifontis (strain DSM 21063 / JCM 11548 / VA1)</name>
    <dbReference type="NCBI Taxonomy" id="410359"/>
    <lineage>
        <taxon>Archaea</taxon>
        <taxon>Thermoproteota</taxon>
        <taxon>Thermoprotei</taxon>
        <taxon>Thermoproteales</taxon>
        <taxon>Thermoproteaceae</taxon>
        <taxon>Pyrobaculum</taxon>
    </lineage>
</organism>
<dbReference type="EMBL" id="CP000561">
    <property type="protein sequence ID" value="ABO07444.1"/>
    <property type="molecule type" value="Genomic_DNA"/>
</dbReference>
<dbReference type="RefSeq" id="WP_011848701.1">
    <property type="nucleotide sequence ID" value="NC_009073.1"/>
</dbReference>
<dbReference type="SMR" id="A3MS27"/>
<dbReference type="STRING" id="410359.Pcal_0004"/>
<dbReference type="GeneID" id="4910185"/>
<dbReference type="KEGG" id="pcl:Pcal_0004"/>
<dbReference type="eggNOG" id="arCOG00470">
    <property type="taxonomic scope" value="Archaea"/>
</dbReference>
<dbReference type="HOGENOM" id="CLU_027255_1_1_2"/>
<dbReference type="OrthoDB" id="8658at2157"/>
<dbReference type="Proteomes" id="UP000001431">
    <property type="component" value="Chromosome"/>
</dbReference>
<dbReference type="GO" id="GO:0005524">
    <property type="term" value="F:ATP binding"/>
    <property type="evidence" value="ECO:0007669"/>
    <property type="project" value="UniProtKB-UniRule"/>
</dbReference>
<dbReference type="GO" id="GO:0016887">
    <property type="term" value="F:ATP hydrolysis activity"/>
    <property type="evidence" value="ECO:0007669"/>
    <property type="project" value="InterPro"/>
</dbReference>
<dbReference type="GO" id="GO:0003689">
    <property type="term" value="F:DNA clamp loader activity"/>
    <property type="evidence" value="ECO:0007669"/>
    <property type="project" value="UniProtKB-UniRule"/>
</dbReference>
<dbReference type="GO" id="GO:0006260">
    <property type="term" value="P:DNA replication"/>
    <property type="evidence" value="ECO:0007669"/>
    <property type="project" value="UniProtKB-UniRule"/>
</dbReference>
<dbReference type="CDD" id="cd00009">
    <property type="entry name" value="AAA"/>
    <property type="match status" value="1"/>
</dbReference>
<dbReference type="CDD" id="cd18140">
    <property type="entry name" value="HLD_clamp_RFC"/>
    <property type="match status" value="1"/>
</dbReference>
<dbReference type="Gene3D" id="1.10.8.60">
    <property type="match status" value="1"/>
</dbReference>
<dbReference type="Gene3D" id="3.40.50.300">
    <property type="entry name" value="P-loop containing nucleotide triphosphate hydrolases"/>
    <property type="match status" value="1"/>
</dbReference>
<dbReference type="HAMAP" id="MF_01508">
    <property type="entry name" value="RfcL"/>
    <property type="match status" value="1"/>
</dbReference>
<dbReference type="InterPro" id="IPR003593">
    <property type="entry name" value="AAA+_ATPase"/>
</dbReference>
<dbReference type="InterPro" id="IPR003959">
    <property type="entry name" value="ATPase_AAA_core"/>
</dbReference>
<dbReference type="InterPro" id="IPR027417">
    <property type="entry name" value="P-loop_NTPase"/>
</dbReference>
<dbReference type="InterPro" id="IPR023935">
    <property type="entry name" value="Rep_factor-C_lsu"/>
</dbReference>
<dbReference type="InterPro" id="IPR047854">
    <property type="entry name" value="RFC_lid"/>
</dbReference>
<dbReference type="NCBIfam" id="NF003229">
    <property type="entry name" value="PRK04195.1-5"/>
    <property type="match status" value="1"/>
</dbReference>
<dbReference type="PANTHER" id="PTHR23389">
    <property type="entry name" value="CHROMOSOME TRANSMISSION FIDELITY FACTOR 18"/>
    <property type="match status" value="1"/>
</dbReference>
<dbReference type="PANTHER" id="PTHR23389:SF6">
    <property type="entry name" value="REPLICATION FACTOR C SUBUNIT 1"/>
    <property type="match status" value="1"/>
</dbReference>
<dbReference type="Pfam" id="PF00004">
    <property type="entry name" value="AAA"/>
    <property type="match status" value="1"/>
</dbReference>
<dbReference type="Pfam" id="PF21960">
    <property type="entry name" value="RCF1-5-like_lid"/>
    <property type="match status" value="1"/>
</dbReference>
<dbReference type="SMART" id="SM00382">
    <property type="entry name" value="AAA"/>
    <property type="match status" value="1"/>
</dbReference>
<dbReference type="SUPFAM" id="SSF52540">
    <property type="entry name" value="P-loop containing nucleoside triphosphate hydrolases"/>
    <property type="match status" value="1"/>
</dbReference>